<keyword id="KW-0119">Carbohydrate metabolism</keyword>
<keyword id="KW-0378">Hydrolase</keyword>
<reference key="1">
    <citation type="journal article" date="2007" name="PLoS ONE">
        <title>Analysis of the neurotoxin complex genes in Clostridium botulinum A1-A4 and B1 strains: BoNT/A3, /Ba4 and /B1 clusters are located within plasmids.</title>
        <authorList>
            <person name="Smith T.J."/>
            <person name="Hill K.K."/>
            <person name="Foley B.T."/>
            <person name="Detter J.C."/>
            <person name="Munk A.C."/>
            <person name="Bruce D.C."/>
            <person name="Doggett N.A."/>
            <person name="Smith L.A."/>
            <person name="Marks J.D."/>
            <person name="Xie G."/>
            <person name="Brettin T.S."/>
        </authorList>
    </citation>
    <scope>NUCLEOTIDE SEQUENCE [LARGE SCALE GENOMIC DNA]</scope>
    <source>
        <strain>ATCC 19397 / Type A</strain>
    </source>
</reference>
<proteinExistence type="inferred from homology"/>
<protein>
    <recommendedName>
        <fullName evidence="1">Glucosamine-6-phosphate deaminase</fullName>
        <ecNumber evidence="1">3.5.99.6</ecNumber>
    </recommendedName>
    <alternativeName>
        <fullName evidence="1">GlcN6P deaminase</fullName>
        <shortName evidence="1">GNPDA</shortName>
    </alternativeName>
    <alternativeName>
        <fullName evidence="1">Glucosamine-6-phosphate isomerase</fullName>
    </alternativeName>
</protein>
<name>NAGB_CLOB1</name>
<sequence>MRIIVVDNYEEMSKKAAAMVASQVILKPDSVLGLATGDTPIGMYKEIINIYKNQKMDFSKARTFNLDEYYGLNRENPQSYYYYMMNNLFNHVNIDKNNINIPNGMADNIEIECKEYERKIDKAGGIDLQILGIGVNGHIGFNEPNISFESETHLVNLNEKTIESNSRFFSSKEEVPTKAISVGIKSIIHSKKIILLACGSAKSDAVSKTINGKINPNIPASILQLHRDVVVIIDKEAASKLNLK</sequence>
<comment type="function">
    <text evidence="1">Catalyzes the reversible isomerization-deamination of glucosamine 6-phosphate (GlcN6P) to form fructose 6-phosphate (Fru6P) and ammonium ion.</text>
</comment>
<comment type="catalytic activity">
    <reaction evidence="1">
        <text>alpha-D-glucosamine 6-phosphate + H2O = beta-D-fructose 6-phosphate + NH4(+)</text>
        <dbReference type="Rhea" id="RHEA:12172"/>
        <dbReference type="ChEBI" id="CHEBI:15377"/>
        <dbReference type="ChEBI" id="CHEBI:28938"/>
        <dbReference type="ChEBI" id="CHEBI:57634"/>
        <dbReference type="ChEBI" id="CHEBI:75989"/>
        <dbReference type="EC" id="3.5.99.6"/>
    </reaction>
</comment>
<comment type="pathway">
    <text evidence="1">Amino-sugar metabolism; N-acetylneuraminate degradation; D-fructose 6-phosphate from N-acetylneuraminate: step 5/5.</text>
</comment>
<comment type="similarity">
    <text evidence="1">Belongs to the glucosamine/galactosamine-6-phosphate isomerase family. NagB subfamily.</text>
</comment>
<gene>
    <name evidence="1" type="primary">nagB</name>
    <name type="ordered locus">CLB_2777</name>
</gene>
<organism>
    <name type="scientific">Clostridium botulinum (strain ATCC 19397 / Type A)</name>
    <dbReference type="NCBI Taxonomy" id="441770"/>
    <lineage>
        <taxon>Bacteria</taxon>
        <taxon>Bacillati</taxon>
        <taxon>Bacillota</taxon>
        <taxon>Clostridia</taxon>
        <taxon>Eubacteriales</taxon>
        <taxon>Clostridiaceae</taxon>
        <taxon>Clostridium</taxon>
    </lineage>
</organism>
<dbReference type="EC" id="3.5.99.6" evidence="1"/>
<dbReference type="EMBL" id="CP000726">
    <property type="protein sequence ID" value="ABS32382.1"/>
    <property type="molecule type" value="Genomic_DNA"/>
</dbReference>
<dbReference type="RefSeq" id="WP_011987104.1">
    <property type="nucleotide sequence ID" value="NC_009697.1"/>
</dbReference>
<dbReference type="SMR" id="A7FX73"/>
<dbReference type="GeneID" id="5187663"/>
<dbReference type="KEGG" id="cba:CLB_2777"/>
<dbReference type="HOGENOM" id="CLU_049611_1_1_9"/>
<dbReference type="UniPathway" id="UPA00629">
    <property type="reaction ID" value="UER00684"/>
</dbReference>
<dbReference type="GO" id="GO:0005737">
    <property type="term" value="C:cytoplasm"/>
    <property type="evidence" value="ECO:0007669"/>
    <property type="project" value="TreeGrafter"/>
</dbReference>
<dbReference type="GO" id="GO:0004342">
    <property type="term" value="F:glucosamine-6-phosphate deaminase activity"/>
    <property type="evidence" value="ECO:0007669"/>
    <property type="project" value="UniProtKB-UniRule"/>
</dbReference>
<dbReference type="GO" id="GO:0042802">
    <property type="term" value="F:identical protein binding"/>
    <property type="evidence" value="ECO:0007669"/>
    <property type="project" value="TreeGrafter"/>
</dbReference>
<dbReference type="GO" id="GO:0005975">
    <property type="term" value="P:carbohydrate metabolic process"/>
    <property type="evidence" value="ECO:0007669"/>
    <property type="project" value="InterPro"/>
</dbReference>
<dbReference type="GO" id="GO:0006043">
    <property type="term" value="P:glucosamine catabolic process"/>
    <property type="evidence" value="ECO:0007669"/>
    <property type="project" value="TreeGrafter"/>
</dbReference>
<dbReference type="GO" id="GO:0006046">
    <property type="term" value="P:N-acetylglucosamine catabolic process"/>
    <property type="evidence" value="ECO:0007669"/>
    <property type="project" value="TreeGrafter"/>
</dbReference>
<dbReference type="GO" id="GO:0019262">
    <property type="term" value="P:N-acetylneuraminate catabolic process"/>
    <property type="evidence" value="ECO:0007669"/>
    <property type="project" value="UniProtKB-UniRule"/>
</dbReference>
<dbReference type="CDD" id="cd01399">
    <property type="entry name" value="GlcN6P_deaminase"/>
    <property type="match status" value="1"/>
</dbReference>
<dbReference type="FunFam" id="3.40.50.1360:FF:000003">
    <property type="entry name" value="Glucosamine-6-phosphate deaminase"/>
    <property type="match status" value="1"/>
</dbReference>
<dbReference type="Gene3D" id="3.40.50.1360">
    <property type="match status" value="1"/>
</dbReference>
<dbReference type="HAMAP" id="MF_01241">
    <property type="entry name" value="GlcN6P_deamin"/>
    <property type="match status" value="1"/>
</dbReference>
<dbReference type="InterPro" id="IPR006148">
    <property type="entry name" value="Glc/Gal-6P_isomerase"/>
</dbReference>
<dbReference type="InterPro" id="IPR004547">
    <property type="entry name" value="Glucosamine6P_isomerase"/>
</dbReference>
<dbReference type="InterPro" id="IPR018321">
    <property type="entry name" value="Glucosamine6P_isomerase_CS"/>
</dbReference>
<dbReference type="InterPro" id="IPR037171">
    <property type="entry name" value="NagB/RpiA_transferase-like"/>
</dbReference>
<dbReference type="NCBIfam" id="TIGR00502">
    <property type="entry name" value="nagB"/>
    <property type="match status" value="1"/>
</dbReference>
<dbReference type="NCBIfam" id="NF001684">
    <property type="entry name" value="PRK00443.1-4"/>
    <property type="match status" value="1"/>
</dbReference>
<dbReference type="PANTHER" id="PTHR11280">
    <property type="entry name" value="GLUCOSAMINE-6-PHOSPHATE ISOMERASE"/>
    <property type="match status" value="1"/>
</dbReference>
<dbReference type="PANTHER" id="PTHR11280:SF5">
    <property type="entry name" value="GLUCOSAMINE-6-PHOSPHATE ISOMERASE"/>
    <property type="match status" value="1"/>
</dbReference>
<dbReference type="Pfam" id="PF01182">
    <property type="entry name" value="Glucosamine_iso"/>
    <property type="match status" value="1"/>
</dbReference>
<dbReference type="SUPFAM" id="SSF100950">
    <property type="entry name" value="NagB/RpiA/CoA transferase-like"/>
    <property type="match status" value="1"/>
</dbReference>
<dbReference type="PROSITE" id="PS01161">
    <property type="entry name" value="GLC_GALNAC_ISOMERASE"/>
    <property type="match status" value="1"/>
</dbReference>
<feature type="chain" id="PRO_1000066967" description="Glucosamine-6-phosphate deaminase">
    <location>
        <begin position="1"/>
        <end position="244"/>
    </location>
</feature>
<feature type="active site" description="Proton acceptor; for enolization step" evidence="1">
    <location>
        <position position="67"/>
    </location>
</feature>
<feature type="active site" description="For ring-opening step" evidence="1">
    <location>
        <position position="136"/>
    </location>
</feature>
<feature type="active site" description="Proton acceptor; for ring-opening step" evidence="1">
    <location>
        <position position="138"/>
    </location>
</feature>
<feature type="active site" description="For ring-opening step" evidence="1">
    <location>
        <position position="143"/>
    </location>
</feature>
<accession>A7FX73</accession>
<evidence type="ECO:0000255" key="1">
    <source>
        <dbReference type="HAMAP-Rule" id="MF_01241"/>
    </source>
</evidence>